<organism>
    <name type="scientific">Pseudoalteromonas translucida (strain TAC 125)</name>
    <dbReference type="NCBI Taxonomy" id="326442"/>
    <lineage>
        <taxon>Bacteria</taxon>
        <taxon>Pseudomonadati</taxon>
        <taxon>Pseudomonadota</taxon>
        <taxon>Gammaproteobacteria</taxon>
        <taxon>Alteromonadales</taxon>
        <taxon>Pseudoalteromonadaceae</taxon>
        <taxon>Pseudoalteromonas</taxon>
    </lineage>
</organism>
<proteinExistence type="inferred from homology"/>
<feature type="chain" id="PRO_1000124324" description="Ketol-acid reductoisomerase (NADP(+))">
    <location>
        <begin position="1"/>
        <end position="490"/>
    </location>
</feature>
<feature type="domain" description="KARI N-terminal Rossmann" evidence="2">
    <location>
        <begin position="17"/>
        <end position="208"/>
    </location>
</feature>
<feature type="domain" description="KARI C-terminal knotted 1" evidence="3">
    <location>
        <begin position="209"/>
        <end position="353"/>
    </location>
</feature>
<feature type="domain" description="KARI C-terminal knotted 2" evidence="3">
    <location>
        <begin position="355"/>
        <end position="486"/>
    </location>
</feature>
<feature type="active site" evidence="1">
    <location>
        <position position="132"/>
    </location>
</feature>
<feature type="binding site" evidence="1">
    <location>
        <begin position="45"/>
        <end position="48"/>
    </location>
    <ligand>
        <name>NADP(+)</name>
        <dbReference type="ChEBI" id="CHEBI:58349"/>
    </ligand>
</feature>
<feature type="binding site" evidence="1">
    <location>
        <position position="68"/>
    </location>
    <ligand>
        <name>NADP(+)</name>
        <dbReference type="ChEBI" id="CHEBI:58349"/>
    </ligand>
</feature>
<feature type="binding site" evidence="1">
    <location>
        <position position="76"/>
    </location>
    <ligand>
        <name>NADP(+)</name>
        <dbReference type="ChEBI" id="CHEBI:58349"/>
    </ligand>
</feature>
<feature type="binding site" evidence="1">
    <location>
        <position position="78"/>
    </location>
    <ligand>
        <name>NADP(+)</name>
        <dbReference type="ChEBI" id="CHEBI:58349"/>
    </ligand>
</feature>
<feature type="binding site" evidence="1">
    <location>
        <begin position="108"/>
        <end position="110"/>
    </location>
    <ligand>
        <name>NADP(+)</name>
        <dbReference type="ChEBI" id="CHEBI:58349"/>
    </ligand>
</feature>
<feature type="binding site" evidence="1">
    <location>
        <position position="158"/>
    </location>
    <ligand>
        <name>NADP(+)</name>
        <dbReference type="ChEBI" id="CHEBI:58349"/>
    </ligand>
</feature>
<feature type="binding site" evidence="1">
    <location>
        <position position="217"/>
    </location>
    <ligand>
        <name>Mg(2+)</name>
        <dbReference type="ChEBI" id="CHEBI:18420"/>
        <label>1</label>
    </ligand>
</feature>
<feature type="binding site" evidence="1">
    <location>
        <position position="217"/>
    </location>
    <ligand>
        <name>Mg(2+)</name>
        <dbReference type="ChEBI" id="CHEBI:18420"/>
        <label>2</label>
    </ligand>
</feature>
<feature type="binding site" evidence="1">
    <location>
        <position position="221"/>
    </location>
    <ligand>
        <name>Mg(2+)</name>
        <dbReference type="ChEBI" id="CHEBI:18420"/>
        <label>1</label>
    </ligand>
</feature>
<feature type="binding site" evidence="1">
    <location>
        <position position="389"/>
    </location>
    <ligand>
        <name>Mg(2+)</name>
        <dbReference type="ChEBI" id="CHEBI:18420"/>
        <label>2</label>
    </ligand>
</feature>
<feature type="binding site" evidence="1">
    <location>
        <position position="393"/>
    </location>
    <ligand>
        <name>Mg(2+)</name>
        <dbReference type="ChEBI" id="CHEBI:18420"/>
        <label>2</label>
    </ligand>
</feature>
<feature type="binding site" evidence="1">
    <location>
        <position position="414"/>
    </location>
    <ligand>
        <name>substrate</name>
    </ligand>
</feature>
<accession>Q3IE45</accession>
<protein>
    <recommendedName>
        <fullName evidence="1">Ketol-acid reductoisomerase (NADP(+))</fullName>
        <shortName evidence="1">KARI</shortName>
        <ecNumber evidence="1">1.1.1.86</ecNumber>
    </recommendedName>
    <alternativeName>
        <fullName evidence="1">Acetohydroxy-acid isomeroreductase</fullName>
        <shortName evidence="1">AHIR</shortName>
    </alternativeName>
    <alternativeName>
        <fullName evidence="1">Alpha-keto-beta-hydroxylacyl reductoisomerase</fullName>
    </alternativeName>
    <alternativeName>
        <fullName evidence="1">Ketol-acid reductoisomerase type 2</fullName>
    </alternativeName>
    <alternativeName>
        <fullName evidence="1">Ketol-acid reductoisomerase type II</fullName>
    </alternativeName>
</protein>
<reference key="1">
    <citation type="journal article" date="2005" name="Genome Res.">
        <title>Coping with cold: the genome of the versatile marine Antarctica bacterium Pseudoalteromonas haloplanktis TAC125.</title>
        <authorList>
            <person name="Medigue C."/>
            <person name="Krin E."/>
            <person name="Pascal G."/>
            <person name="Barbe V."/>
            <person name="Bernsel A."/>
            <person name="Bertin P.N."/>
            <person name="Cheung F."/>
            <person name="Cruveiller S."/>
            <person name="D'Amico S."/>
            <person name="Duilio A."/>
            <person name="Fang G."/>
            <person name="Feller G."/>
            <person name="Ho C."/>
            <person name="Mangenot S."/>
            <person name="Marino G."/>
            <person name="Nilsson J."/>
            <person name="Parrilli E."/>
            <person name="Rocha E.P.C."/>
            <person name="Rouy Z."/>
            <person name="Sekowska A."/>
            <person name="Tutino M.L."/>
            <person name="Vallenet D."/>
            <person name="von Heijne G."/>
            <person name="Danchin A."/>
        </authorList>
    </citation>
    <scope>NUCLEOTIDE SEQUENCE [LARGE SCALE GENOMIC DNA]</scope>
    <source>
        <strain>TAC 125</strain>
    </source>
</reference>
<evidence type="ECO:0000255" key="1">
    <source>
        <dbReference type="HAMAP-Rule" id="MF_00435"/>
    </source>
</evidence>
<evidence type="ECO:0000255" key="2">
    <source>
        <dbReference type="PROSITE-ProRule" id="PRU01197"/>
    </source>
</evidence>
<evidence type="ECO:0000255" key="3">
    <source>
        <dbReference type="PROSITE-ProRule" id="PRU01198"/>
    </source>
</evidence>
<dbReference type="EC" id="1.1.1.86" evidence="1"/>
<dbReference type="EMBL" id="CR954246">
    <property type="protein sequence ID" value="CAI85930.1"/>
    <property type="molecule type" value="Genomic_DNA"/>
</dbReference>
<dbReference type="SMR" id="Q3IE45"/>
<dbReference type="STRING" id="326442.PSHAa0849"/>
<dbReference type="KEGG" id="pha:PSHAa0849"/>
<dbReference type="eggNOG" id="COG0059">
    <property type="taxonomic scope" value="Bacteria"/>
</dbReference>
<dbReference type="HOGENOM" id="CLU_551905_0_0_6"/>
<dbReference type="BioCyc" id="PHAL326442:PSHA_RS04145-MONOMER"/>
<dbReference type="UniPathway" id="UPA00047">
    <property type="reaction ID" value="UER00056"/>
</dbReference>
<dbReference type="UniPathway" id="UPA00049">
    <property type="reaction ID" value="UER00060"/>
</dbReference>
<dbReference type="Proteomes" id="UP000006843">
    <property type="component" value="Chromosome I"/>
</dbReference>
<dbReference type="GO" id="GO:0005829">
    <property type="term" value="C:cytosol"/>
    <property type="evidence" value="ECO:0007669"/>
    <property type="project" value="TreeGrafter"/>
</dbReference>
<dbReference type="GO" id="GO:0004455">
    <property type="term" value="F:ketol-acid reductoisomerase activity"/>
    <property type="evidence" value="ECO:0007669"/>
    <property type="project" value="UniProtKB-UniRule"/>
</dbReference>
<dbReference type="GO" id="GO:0000287">
    <property type="term" value="F:magnesium ion binding"/>
    <property type="evidence" value="ECO:0007669"/>
    <property type="project" value="UniProtKB-UniRule"/>
</dbReference>
<dbReference type="GO" id="GO:0009097">
    <property type="term" value="P:isoleucine biosynthetic process"/>
    <property type="evidence" value="ECO:0007669"/>
    <property type="project" value="UniProtKB-UniRule"/>
</dbReference>
<dbReference type="GO" id="GO:0009099">
    <property type="term" value="P:L-valine biosynthetic process"/>
    <property type="evidence" value="ECO:0007669"/>
    <property type="project" value="UniProtKB-UniRule"/>
</dbReference>
<dbReference type="Gene3D" id="1.10.1040.10">
    <property type="entry name" value="N-(1-d-carboxylethyl)-l-norvaline Dehydrogenase, domain 2"/>
    <property type="match status" value="1"/>
</dbReference>
<dbReference type="Gene3D" id="3.40.50.720">
    <property type="entry name" value="NAD(P)-binding Rossmann-like Domain"/>
    <property type="match status" value="1"/>
</dbReference>
<dbReference type="HAMAP" id="MF_00435">
    <property type="entry name" value="IlvC"/>
    <property type="match status" value="1"/>
</dbReference>
<dbReference type="InterPro" id="IPR008927">
    <property type="entry name" value="6-PGluconate_DH-like_C_sf"/>
</dbReference>
<dbReference type="InterPro" id="IPR013328">
    <property type="entry name" value="6PGD_dom2"/>
</dbReference>
<dbReference type="InterPro" id="IPR013023">
    <property type="entry name" value="KARI"/>
</dbReference>
<dbReference type="InterPro" id="IPR000506">
    <property type="entry name" value="KARI_C"/>
</dbReference>
<dbReference type="InterPro" id="IPR013116">
    <property type="entry name" value="KARI_N"/>
</dbReference>
<dbReference type="InterPro" id="IPR036291">
    <property type="entry name" value="NAD(P)-bd_dom_sf"/>
</dbReference>
<dbReference type="NCBIfam" id="TIGR00465">
    <property type="entry name" value="ilvC"/>
    <property type="match status" value="1"/>
</dbReference>
<dbReference type="NCBIfam" id="NF003557">
    <property type="entry name" value="PRK05225.1"/>
    <property type="match status" value="1"/>
</dbReference>
<dbReference type="PANTHER" id="PTHR21371">
    <property type="entry name" value="KETOL-ACID REDUCTOISOMERASE, MITOCHONDRIAL"/>
    <property type="match status" value="1"/>
</dbReference>
<dbReference type="PANTHER" id="PTHR21371:SF1">
    <property type="entry name" value="KETOL-ACID REDUCTOISOMERASE, MITOCHONDRIAL"/>
    <property type="match status" value="1"/>
</dbReference>
<dbReference type="Pfam" id="PF01450">
    <property type="entry name" value="KARI_C"/>
    <property type="match status" value="2"/>
</dbReference>
<dbReference type="Pfam" id="PF07991">
    <property type="entry name" value="KARI_N"/>
    <property type="match status" value="1"/>
</dbReference>
<dbReference type="SUPFAM" id="SSF48179">
    <property type="entry name" value="6-phosphogluconate dehydrogenase C-terminal domain-like"/>
    <property type="match status" value="2"/>
</dbReference>
<dbReference type="SUPFAM" id="SSF51735">
    <property type="entry name" value="NAD(P)-binding Rossmann-fold domains"/>
    <property type="match status" value="1"/>
</dbReference>
<dbReference type="PROSITE" id="PS51851">
    <property type="entry name" value="KARI_C"/>
    <property type="match status" value="2"/>
</dbReference>
<dbReference type="PROSITE" id="PS51850">
    <property type="entry name" value="KARI_N"/>
    <property type="match status" value="1"/>
</dbReference>
<comment type="function">
    <text evidence="1">Involved in the biosynthesis of branched-chain amino acids (BCAA). Catalyzes an alkyl-migration followed by a ketol-acid reduction of (S)-2-acetolactate (S2AL) to yield (R)-2,3-dihydroxy-isovalerate. In the isomerase reaction, S2AL is rearranged via a Mg-dependent methyl migration to produce 3-hydroxy-3-methyl-2-ketobutyrate (HMKB). In the reductase reaction, this 2-ketoacid undergoes a metal-dependent reduction by NADPH to yield (R)-2,3-dihydroxy-isovalerate.</text>
</comment>
<comment type="catalytic activity">
    <reaction evidence="1">
        <text>(2R)-2,3-dihydroxy-3-methylbutanoate + NADP(+) = (2S)-2-acetolactate + NADPH + H(+)</text>
        <dbReference type="Rhea" id="RHEA:22068"/>
        <dbReference type="ChEBI" id="CHEBI:15378"/>
        <dbReference type="ChEBI" id="CHEBI:49072"/>
        <dbReference type="ChEBI" id="CHEBI:57783"/>
        <dbReference type="ChEBI" id="CHEBI:58349"/>
        <dbReference type="ChEBI" id="CHEBI:58476"/>
        <dbReference type="EC" id="1.1.1.86"/>
    </reaction>
</comment>
<comment type="catalytic activity">
    <reaction evidence="1">
        <text>(2R,3R)-2,3-dihydroxy-3-methylpentanoate + NADP(+) = (S)-2-ethyl-2-hydroxy-3-oxobutanoate + NADPH + H(+)</text>
        <dbReference type="Rhea" id="RHEA:13493"/>
        <dbReference type="ChEBI" id="CHEBI:15378"/>
        <dbReference type="ChEBI" id="CHEBI:49256"/>
        <dbReference type="ChEBI" id="CHEBI:49258"/>
        <dbReference type="ChEBI" id="CHEBI:57783"/>
        <dbReference type="ChEBI" id="CHEBI:58349"/>
        <dbReference type="EC" id="1.1.1.86"/>
    </reaction>
</comment>
<comment type="cofactor">
    <cofactor evidence="1">
        <name>Mg(2+)</name>
        <dbReference type="ChEBI" id="CHEBI:18420"/>
    </cofactor>
    <text evidence="1">Binds 2 magnesium ions per subunit.</text>
</comment>
<comment type="pathway">
    <text evidence="1">Amino-acid biosynthesis; L-isoleucine biosynthesis; L-isoleucine from 2-oxobutanoate: step 2/4.</text>
</comment>
<comment type="pathway">
    <text evidence="1">Amino-acid biosynthesis; L-valine biosynthesis; L-valine from pyruvate: step 2/4.</text>
</comment>
<comment type="similarity">
    <text evidence="1">Belongs to the ketol-acid reductoisomerase family.</text>
</comment>
<gene>
    <name evidence="1" type="primary">ilvC</name>
    <name type="ordered locus">PSHAa0849</name>
</gene>
<name>ILVC_PSET1</name>
<keyword id="KW-0028">Amino-acid biosynthesis</keyword>
<keyword id="KW-0100">Branched-chain amino acid biosynthesis</keyword>
<keyword id="KW-0460">Magnesium</keyword>
<keyword id="KW-0479">Metal-binding</keyword>
<keyword id="KW-0521">NADP</keyword>
<keyword id="KW-0560">Oxidoreductase</keyword>
<keyword id="KW-1185">Reference proteome</keyword>
<keyword id="KW-0677">Repeat</keyword>
<sequence length="490" mass="54050">MANYFNTLPLREQLAQLAQCEFMNADEFTDGVDALKGKKLVIVGCGAQGLNQGLNLRDSGLDVSYTLRDSAISERRQSFLNASENGFTVGTYQELIPTADVVLNLTPDKQHTSVVNAIMPLMKQGSTLAYSHGFNIVEEGMQVRDDITVIMVAPKCPGSEVREEYKRGFGVPTLIAVHPENDPQGHGLAQAKAYAAGTGGHRAGVLKSSFIAEVKSDLMGEQTILCGMLQTGSILCFDKMIEKGIDAGYASKLIQYGWEVITEALKYGGVTNMLDRLSNPAKVKAFELSEELKQIMRPLYNKHQDDIIDGTFSRTMMEDWNNDDANLLKWRAETAETHFEKTPAGNVEIAEQEFFDNGILMVAMVKAGVELAFETMTAAGIIAESAYYESLHETPLIANTIARKKLFEMNRTISDTAEYGCYLYNHACLPLLQDFMQKIDTDVIGKGLGEHSNQVDNQTLIQINTALREHPVEKVGATLRGYMSAMKKIV</sequence>